<feature type="chain" id="PRO_0000182313" description="Transcriptional repressor NrdR">
    <location>
        <begin position="1"/>
        <end position="154"/>
    </location>
</feature>
<feature type="domain" description="ATP-cone" evidence="1">
    <location>
        <begin position="49"/>
        <end position="139"/>
    </location>
</feature>
<feature type="zinc finger region" evidence="1">
    <location>
        <begin position="3"/>
        <end position="34"/>
    </location>
</feature>
<proteinExistence type="inferred from homology"/>
<comment type="function">
    <text evidence="1">Negatively regulates transcription of bacterial ribonucleotide reductase nrd genes and operons by binding to NrdR-boxes.</text>
</comment>
<comment type="cofactor">
    <cofactor evidence="1">
        <name>Zn(2+)</name>
        <dbReference type="ChEBI" id="CHEBI:29105"/>
    </cofactor>
    <text evidence="1">Binds 1 zinc ion.</text>
</comment>
<comment type="similarity">
    <text evidence="1">Belongs to the NrdR family.</text>
</comment>
<evidence type="ECO:0000255" key="1">
    <source>
        <dbReference type="HAMAP-Rule" id="MF_00440"/>
    </source>
</evidence>
<dbReference type="EMBL" id="AL596169">
    <property type="protein sequence ID" value="CAC96828.1"/>
    <property type="molecule type" value="Genomic_DNA"/>
</dbReference>
<dbReference type="PIR" id="AD1632">
    <property type="entry name" value="AD1632"/>
</dbReference>
<dbReference type="RefSeq" id="WP_003762439.1">
    <property type="nucleotide sequence ID" value="NC_003212.1"/>
</dbReference>
<dbReference type="SMR" id="Q92BF3"/>
<dbReference type="STRING" id="272626.gene:17565928"/>
<dbReference type="GeneID" id="93239441"/>
<dbReference type="KEGG" id="lin:lin1597"/>
<dbReference type="eggNOG" id="COG1327">
    <property type="taxonomic scope" value="Bacteria"/>
</dbReference>
<dbReference type="HOGENOM" id="CLU_108412_0_0_9"/>
<dbReference type="OrthoDB" id="9807461at2"/>
<dbReference type="Proteomes" id="UP000002513">
    <property type="component" value="Chromosome"/>
</dbReference>
<dbReference type="GO" id="GO:0005524">
    <property type="term" value="F:ATP binding"/>
    <property type="evidence" value="ECO:0007669"/>
    <property type="project" value="UniProtKB-KW"/>
</dbReference>
<dbReference type="GO" id="GO:0003677">
    <property type="term" value="F:DNA binding"/>
    <property type="evidence" value="ECO:0007669"/>
    <property type="project" value="UniProtKB-KW"/>
</dbReference>
<dbReference type="GO" id="GO:0008270">
    <property type="term" value="F:zinc ion binding"/>
    <property type="evidence" value="ECO:0007669"/>
    <property type="project" value="UniProtKB-UniRule"/>
</dbReference>
<dbReference type="GO" id="GO:0045892">
    <property type="term" value="P:negative regulation of DNA-templated transcription"/>
    <property type="evidence" value="ECO:0007669"/>
    <property type="project" value="UniProtKB-UniRule"/>
</dbReference>
<dbReference type="HAMAP" id="MF_00440">
    <property type="entry name" value="NrdR"/>
    <property type="match status" value="1"/>
</dbReference>
<dbReference type="InterPro" id="IPR005144">
    <property type="entry name" value="ATP-cone_dom"/>
</dbReference>
<dbReference type="InterPro" id="IPR055173">
    <property type="entry name" value="NrdR-like_N"/>
</dbReference>
<dbReference type="InterPro" id="IPR003796">
    <property type="entry name" value="RNR_NrdR-like"/>
</dbReference>
<dbReference type="NCBIfam" id="TIGR00244">
    <property type="entry name" value="transcriptional regulator NrdR"/>
    <property type="match status" value="1"/>
</dbReference>
<dbReference type="PANTHER" id="PTHR30455">
    <property type="entry name" value="TRANSCRIPTIONAL REPRESSOR NRDR"/>
    <property type="match status" value="1"/>
</dbReference>
<dbReference type="PANTHER" id="PTHR30455:SF2">
    <property type="entry name" value="TRANSCRIPTIONAL REPRESSOR NRDR"/>
    <property type="match status" value="1"/>
</dbReference>
<dbReference type="Pfam" id="PF03477">
    <property type="entry name" value="ATP-cone"/>
    <property type="match status" value="1"/>
</dbReference>
<dbReference type="Pfam" id="PF22811">
    <property type="entry name" value="Zn_ribbon_NrdR"/>
    <property type="match status" value="1"/>
</dbReference>
<dbReference type="PROSITE" id="PS51161">
    <property type="entry name" value="ATP_CONE"/>
    <property type="match status" value="1"/>
</dbReference>
<protein>
    <recommendedName>
        <fullName evidence="1">Transcriptional repressor NrdR</fullName>
    </recommendedName>
</protein>
<organism>
    <name type="scientific">Listeria innocua serovar 6a (strain ATCC BAA-680 / CLIP 11262)</name>
    <dbReference type="NCBI Taxonomy" id="272626"/>
    <lineage>
        <taxon>Bacteria</taxon>
        <taxon>Bacillati</taxon>
        <taxon>Bacillota</taxon>
        <taxon>Bacilli</taxon>
        <taxon>Bacillales</taxon>
        <taxon>Listeriaceae</taxon>
        <taxon>Listeria</taxon>
    </lineage>
</organism>
<sequence length="154" mass="17910">MRCPTCKYNGTRVVDSRPADDGNSIRRRRECEKCGFRFTTFEKVEESPLIVVKKDGAREEFAREKVRRGLIRACEKRPVSAEQIEEIVNEVERELRNIGDSEIASDLIGEKVMNKLASLDEVAYVRFASVYRQFKDISVFVEELKDLMEKNKDR</sequence>
<keyword id="KW-0067">ATP-binding</keyword>
<keyword id="KW-0238">DNA-binding</keyword>
<keyword id="KW-0479">Metal-binding</keyword>
<keyword id="KW-0547">Nucleotide-binding</keyword>
<keyword id="KW-0678">Repressor</keyword>
<keyword id="KW-0804">Transcription</keyword>
<keyword id="KW-0805">Transcription regulation</keyword>
<keyword id="KW-0862">Zinc</keyword>
<keyword id="KW-0863">Zinc-finger</keyword>
<accession>Q92BF3</accession>
<gene>
    <name evidence="1" type="primary">nrdR</name>
    <name type="ordered locus">lin1597</name>
</gene>
<reference key="1">
    <citation type="journal article" date="2001" name="Science">
        <title>Comparative genomics of Listeria species.</title>
        <authorList>
            <person name="Glaser P."/>
            <person name="Frangeul L."/>
            <person name="Buchrieser C."/>
            <person name="Rusniok C."/>
            <person name="Amend A."/>
            <person name="Baquero F."/>
            <person name="Berche P."/>
            <person name="Bloecker H."/>
            <person name="Brandt P."/>
            <person name="Chakraborty T."/>
            <person name="Charbit A."/>
            <person name="Chetouani F."/>
            <person name="Couve E."/>
            <person name="de Daruvar A."/>
            <person name="Dehoux P."/>
            <person name="Domann E."/>
            <person name="Dominguez-Bernal G."/>
            <person name="Duchaud E."/>
            <person name="Durant L."/>
            <person name="Dussurget O."/>
            <person name="Entian K.-D."/>
            <person name="Fsihi H."/>
            <person name="Garcia-del Portillo F."/>
            <person name="Garrido P."/>
            <person name="Gautier L."/>
            <person name="Goebel W."/>
            <person name="Gomez-Lopez N."/>
            <person name="Hain T."/>
            <person name="Hauf J."/>
            <person name="Jackson D."/>
            <person name="Jones L.-M."/>
            <person name="Kaerst U."/>
            <person name="Kreft J."/>
            <person name="Kuhn M."/>
            <person name="Kunst F."/>
            <person name="Kurapkat G."/>
            <person name="Madueno E."/>
            <person name="Maitournam A."/>
            <person name="Mata Vicente J."/>
            <person name="Ng E."/>
            <person name="Nedjari H."/>
            <person name="Nordsiek G."/>
            <person name="Novella S."/>
            <person name="de Pablos B."/>
            <person name="Perez-Diaz J.-C."/>
            <person name="Purcell R."/>
            <person name="Remmel B."/>
            <person name="Rose M."/>
            <person name="Schlueter T."/>
            <person name="Simoes N."/>
            <person name="Tierrez A."/>
            <person name="Vazquez-Boland J.-A."/>
            <person name="Voss H."/>
            <person name="Wehland J."/>
            <person name="Cossart P."/>
        </authorList>
    </citation>
    <scope>NUCLEOTIDE SEQUENCE [LARGE SCALE GENOMIC DNA]</scope>
    <source>
        <strain>ATCC BAA-680 / CLIP 11262</strain>
    </source>
</reference>
<name>NRDR_LISIN</name>